<comment type="subunit">
    <text evidence="4">Component of the mitochondrial ribosome small subunit (28S) which comprises a 12S rRNA and about 30 distinct proteins.</text>
</comment>
<comment type="subcellular location">
    <subcellularLocation>
        <location evidence="4">Mitochondrion</location>
    </subcellularLocation>
</comment>
<comment type="similarity">
    <text evidence="5">Belongs to the mitochondrion-specific ribosomal protein mS33 family.</text>
</comment>
<feature type="initiator methionine" description="Removed" evidence="1">
    <location>
        <position position="1"/>
    </location>
</feature>
<feature type="chain" id="PRO_0000087726" description="Small ribosomal subunit protein mS33">
    <location>
        <begin position="2"/>
        <end position="106"/>
    </location>
</feature>
<feature type="region of interest" description="Disordered" evidence="2">
    <location>
        <begin position="85"/>
        <end position="106"/>
    </location>
</feature>
<feature type="compositionally biased region" description="Basic residues" evidence="2">
    <location>
        <begin position="85"/>
        <end position="94"/>
    </location>
</feature>
<feature type="compositionally biased region" description="Basic and acidic residues" evidence="2">
    <location>
        <begin position="95"/>
        <end position="106"/>
    </location>
</feature>
<feature type="modified residue" description="N-acetylserine" evidence="1">
    <location>
        <position position="2"/>
    </location>
</feature>
<feature type="helix" evidence="8">
    <location>
        <begin position="6"/>
        <end position="19"/>
    </location>
</feature>
<feature type="turn" evidence="8">
    <location>
        <begin position="28"/>
        <end position="30"/>
    </location>
</feature>
<feature type="helix" evidence="8">
    <location>
        <begin position="31"/>
        <end position="38"/>
    </location>
</feature>
<feature type="turn" evidence="8">
    <location>
        <begin position="42"/>
        <end position="44"/>
    </location>
</feature>
<feature type="strand" evidence="8">
    <location>
        <begin position="45"/>
        <end position="48"/>
    </location>
</feature>
<feature type="turn" evidence="8">
    <location>
        <begin position="49"/>
        <end position="51"/>
    </location>
</feature>
<feature type="helix" evidence="8">
    <location>
        <begin position="56"/>
        <end position="68"/>
    </location>
</feature>
<feature type="helix" evidence="8">
    <location>
        <begin position="76"/>
        <end position="86"/>
    </location>
</feature>
<feature type="turn" evidence="8">
    <location>
        <begin position="87"/>
        <end position="90"/>
    </location>
</feature>
<feature type="strand" evidence="8">
    <location>
        <begin position="96"/>
        <end position="99"/>
    </location>
</feature>
<keyword id="KW-0002">3D-structure</keyword>
<keyword id="KW-0007">Acetylation</keyword>
<keyword id="KW-0903">Direct protein sequencing</keyword>
<keyword id="KW-0496">Mitochondrion</keyword>
<keyword id="KW-1185">Reference proteome</keyword>
<keyword id="KW-0687">Ribonucleoprotein</keyword>
<keyword id="KW-0689">Ribosomal protein</keyword>
<reference evidence="6" key="1">
    <citation type="submission" date="2005-11" db="EMBL/GenBank/DDBJ databases">
        <authorList>
            <consortium name="NIH - Mammalian Gene Collection (MGC) project"/>
        </authorList>
    </citation>
    <scope>NUCLEOTIDE SEQUENCE [LARGE SCALE MRNA]</scope>
    <source>
        <strain evidence="6">Crossbred X Angus</strain>
        <tissue evidence="6">Liver</tissue>
    </source>
</reference>
<reference evidence="5" key="2">
    <citation type="journal article" date="2001" name="J. Biol. Chem.">
        <title>The small subunit of the mammalian mitochondrial ribosome: identification of the full complement of ribosomal proteins present.</title>
        <authorList>
            <person name="Koc E.C."/>
            <person name="Burkhart W."/>
            <person name="Blackburn K."/>
            <person name="Moseley A."/>
            <person name="Spremulli L.L."/>
        </authorList>
    </citation>
    <scope>PROTEIN SEQUENCE OF 36-44</scope>
    <source>
        <tissue evidence="3">Liver</tissue>
    </source>
</reference>
<reference evidence="7" key="3">
    <citation type="journal article" date="2014" name="Proc. Natl. Acad. Sci. U.S.A.">
        <title>Cryo-EM structure of the small subunit of the mammalian mitochondrial ribosome.</title>
        <authorList>
            <person name="Kaushal P.S."/>
            <person name="Sharma M.R."/>
            <person name="Booth T.M."/>
            <person name="Haque E.M."/>
            <person name="Tung C.S."/>
            <person name="Sanbonmatsu K.Y."/>
            <person name="Spremulli L.L."/>
            <person name="Agrawal R.K."/>
        </authorList>
    </citation>
    <scope>STRUCTURE BY ELECTRON MICROSCOPY (7.00 ANGSTROMS)</scope>
    <scope>SUBCELLULAR LOCATION</scope>
    <scope>SUBUNIT</scope>
</reference>
<protein>
    <recommendedName>
        <fullName evidence="5">Small ribosomal subunit protein mS33</fullName>
    </recommendedName>
    <alternativeName>
        <fullName>28S ribosomal protein S33, mitochondrial</fullName>
        <shortName>MRP-S33</shortName>
        <shortName>S33mt</shortName>
    </alternativeName>
</protein>
<accession>P82926</accession>
<accession>Q32LL3</accession>
<sequence length="106" mass="12453">MSSLSEYALRMSRLSARLFSEVARPTDSKSMKVVKLFSEQPLAKRKETYDWYPNHNTYFALMGILRSVGLYRDEHQDFKDEQLRLKKLRGKVKPRKGEGKRAAKKK</sequence>
<dbReference type="EMBL" id="BC109522">
    <property type="protein sequence ID" value="AAI09523.1"/>
    <property type="molecule type" value="mRNA"/>
</dbReference>
<dbReference type="RefSeq" id="NP_001032694.1">
    <property type="nucleotide sequence ID" value="NM_001037605.2"/>
</dbReference>
<dbReference type="RefSeq" id="XP_005205911.1">
    <property type="nucleotide sequence ID" value="XM_005205854.4"/>
</dbReference>
<dbReference type="RefSeq" id="XP_005205912.1">
    <property type="nucleotide sequence ID" value="XM_005205855.4"/>
</dbReference>
<dbReference type="RefSeq" id="XP_010802871.1">
    <property type="nucleotide sequence ID" value="XM_010804569.4"/>
</dbReference>
<dbReference type="RefSeq" id="XP_015326258.1">
    <property type="nucleotide sequence ID" value="XM_015470772.1"/>
</dbReference>
<dbReference type="PDB" id="3JD5">
    <property type="method" value="EM"/>
    <property type="resolution" value="7.00 A"/>
    <property type="chains" value="i=1-106"/>
</dbReference>
<dbReference type="PDB" id="6NEQ">
    <property type="method" value="EM"/>
    <property type="resolution" value="3.32 A"/>
    <property type="chains" value="i=1-106"/>
</dbReference>
<dbReference type="PDB" id="6NF8">
    <property type="method" value="EM"/>
    <property type="resolution" value="3.48 A"/>
    <property type="chains" value="i=1-106"/>
</dbReference>
<dbReference type="PDBsum" id="3JD5"/>
<dbReference type="PDBsum" id="6NEQ"/>
<dbReference type="PDBsum" id="6NF8"/>
<dbReference type="EMDB" id="EMD-9358"/>
<dbReference type="EMDB" id="EMD-9362"/>
<dbReference type="SMR" id="P82926"/>
<dbReference type="CORUM" id="P82926"/>
<dbReference type="FunCoup" id="P82926">
    <property type="interactions" value="832"/>
</dbReference>
<dbReference type="IntAct" id="P82926">
    <property type="interactions" value="2"/>
</dbReference>
<dbReference type="STRING" id="9913.ENSBTAP00000006954"/>
<dbReference type="PaxDb" id="9913-ENSBTAP00000006954"/>
<dbReference type="Ensembl" id="ENSBTAT00000006954.3">
    <property type="protein sequence ID" value="ENSBTAP00000006954.2"/>
    <property type="gene ID" value="ENSBTAG00000005285.4"/>
</dbReference>
<dbReference type="GeneID" id="523435"/>
<dbReference type="KEGG" id="bta:523435"/>
<dbReference type="CTD" id="51650"/>
<dbReference type="VEuPathDB" id="HostDB:ENSBTAG00000005285"/>
<dbReference type="VGNC" id="VGNC:31671">
    <property type="gene designation" value="MRPS33"/>
</dbReference>
<dbReference type="eggNOG" id="KOG4104">
    <property type="taxonomic scope" value="Eukaryota"/>
</dbReference>
<dbReference type="GeneTree" id="ENSGT00390000011401"/>
<dbReference type="HOGENOM" id="CLU_162208_2_0_1"/>
<dbReference type="InParanoid" id="P82926"/>
<dbReference type="OMA" id="YSGLMWR"/>
<dbReference type="OrthoDB" id="5980584at2759"/>
<dbReference type="TreeFam" id="TF313928"/>
<dbReference type="Reactome" id="R-BTA-5389840">
    <property type="pathway name" value="Mitochondrial translation elongation"/>
</dbReference>
<dbReference type="Reactome" id="R-BTA-5419276">
    <property type="pathway name" value="Mitochondrial translation termination"/>
</dbReference>
<dbReference type="Proteomes" id="UP000009136">
    <property type="component" value="Chromosome 4"/>
</dbReference>
<dbReference type="Bgee" id="ENSBTAG00000005285">
    <property type="expression patterns" value="Expressed in cardiac atrium and 102 other cell types or tissues"/>
</dbReference>
<dbReference type="GO" id="GO:0005743">
    <property type="term" value="C:mitochondrial inner membrane"/>
    <property type="evidence" value="ECO:0000304"/>
    <property type="project" value="Reactome"/>
</dbReference>
<dbReference type="GO" id="GO:0005763">
    <property type="term" value="C:mitochondrial small ribosomal subunit"/>
    <property type="evidence" value="ECO:0000314"/>
    <property type="project" value="UniProtKB"/>
</dbReference>
<dbReference type="GO" id="GO:0005739">
    <property type="term" value="C:mitochondrion"/>
    <property type="evidence" value="ECO:0000318"/>
    <property type="project" value="GO_Central"/>
</dbReference>
<dbReference type="InterPro" id="IPR013219">
    <property type="entry name" value="Ribosomal_mS33"/>
</dbReference>
<dbReference type="PANTHER" id="PTHR13362">
    <property type="entry name" value="MITOCHONDRIAL RIBOSOMAL PROTEIN S33"/>
    <property type="match status" value="1"/>
</dbReference>
<dbReference type="PANTHER" id="PTHR13362:SF2">
    <property type="entry name" value="SMALL RIBOSOMAL SUBUNIT PROTEIN MS33"/>
    <property type="match status" value="1"/>
</dbReference>
<dbReference type="Pfam" id="PF08293">
    <property type="entry name" value="MRP-S33"/>
    <property type="match status" value="1"/>
</dbReference>
<evidence type="ECO:0000250" key="1">
    <source>
        <dbReference type="UniProtKB" id="Q9Y291"/>
    </source>
</evidence>
<evidence type="ECO:0000256" key="2">
    <source>
        <dbReference type="SAM" id="MobiDB-lite"/>
    </source>
</evidence>
<evidence type="ECO:0000269" key="3">
    <source>
    </source>
</evidence>
<evidence type="ECO:0000269" key="4">
    <source>
    </source>
</evidence>
<evidence type="ECO:0000305" key="5"/>
<evidence type="ECO:0000312" key="6">
    <source>
        <dbReference type="EMBL" id="AAI09523.1"/>
    </source>
</evidence>
<evidence type="ECO:0007744" key="7">
    <source>
        <dbReference type="PDB" id="3JD5"/>
    </source>
</evidence>
<evidence type="ECO:0007829" key="8">
    <source>
        <dbReference type="PDB" id="6NEQ"/>
    </source>
</evidence>
<proteinExistence type="evidence at protein level"/>
<organism>
    <name type="scientific">Bos taurus</name>
    <name type="common">Bovine</name>
    <dbReference type="NCBI Taxonomy" id="9913"/>
    <lineage>
        <taxon>Eukaryota</taxon>
        <taxon>Metazoa</taxon>
        <taxon>Chordata</taxon>
        <taxon>Craniata</taxon>
        <taxon>Vertebrata</taxon>
        <taxon>Euteleostomi</taxon>
        <taxon>Mammalia</taxon>
        <taxon>Eutheria</taxon>
        <taxon>Laurasiatheria</taxon>
        <taxon>Artiodactyla</taxon>
        <taxon>Ruminantia</taxon>
        <taxon>Pecora</taxon>
        <taxon>Bovidae</taxon>
        <taxon>Bovinae</taxon>
        <taxon>Bos</taxon>
    </lineage>
</organism>
<gene>
    <name evidence="1" type="primary">MRPS33</name>
</gene>
<name>RT33_BOVIN</name>